<gene>
    <name type="primary">DEFB110</name>
    <name type="synonym">DEFB111</name>
</gene>
<proteinExistence type="inferred from homology"/>
<evidence type="ECO:0000250" key="1"/>
<evidence type="ECO:0000255" key="2"/>
<evidence type="ECO:0000305" key="3"/>
<reference key="1">
    <citation type="journal article" date="2005" name="Physiol. Genomics">
        <title>Cross-species analysis of the mammalian beta-defensin gene family: presence of syntenic gene clusters and preferential expression in the male reproductive tract.</title>
        <authorList>
            <person name="Patil A.A."/>
            <person name="Cai Y."/>
            <person name="Sang Y."/>
            <person name="Blecha F."/>
            <person name="Zhang G."/>
        </authorList>
    </citation>
    <scope>NUCLEOTIDE SEQUENCE [MRNA]</scope>
</reference>
<accession>Q30KL6</accession>
<sequence length="67" mass="8027">MKIQLFFFILLFWVTILPAKMKYPEYGSLDLRRECRMGNGRCKNQCHENEIRIAYCIRPGTHCCLQQ</sequence>
<protein>
    <recommendedName>
        <fullName>Beta-defensin 110</fullName>
    </recommendedName>
    <alternativeName>
        <fullName>Beta-defensin 111</fullName>
    </alternativeName>
    <alternativeName>
        <fullName>Defensin, beta 110</fullName>
    </alternativeName>
    <alternativeName>
        <fullName>Defensin, beta 111</fullName>
    </alternativeName>
</protein>
<name>DB110_PANTR</name>
<feature type="signal peptide" evidence="2">
    <location>
        <begin position="1"/>
        <end position="19"/>
    </location>
</feature>
<feature type="chain" id="PRO_0000045337" description="Beta-defensin 110">
    <location>
        <begin position="20"/>
        <end position="67"/>
    </location>
</feature>
<feature type="disulfide bond" evidence="1">
    <location>
        <begin position="35"/>
        <end position="63"/>
    </location>
</feature>
<feature type="disulfide bond" evidence="1">
    <location>
        <begin position="42"/>
        <end position="56"/>
    </location>
</feature>
<feature type="disulfide bond" evidence="1">
    <location>
        <begin position="46"/>
        <end position="64"/>
    </location>
</feature>
<comment type="function">
    <text evidence="1">Has antibacterial activity.</text>
</comment>
<comment type="subcellular location">
    <subcellularLocation>
        <location evidence="1">Secreted</location>
    </subcellularLocation>
</comment>
<comment type="similarity">
    <text evidence="3">Belongs to the beta-defensin family.</text>
</comment>
<organism>
    <name type="scientific">Pan troglodytes</name>
    <name type="common">Chimpanzee</name>
    <dbReference type="NCBI Taxonomy" id="9598"/>
    <lineage>
        <taxon>Eukaryota</taxon>
        <taxon>Metazoa</taxon>
        <taxon>Chordata</taxon>
        <taxon>Craniata</taxon>
        <taxon>Vertebrata</taxon>
        <taxon>Euteleostomi</taxon>
        <taxon>Mammalia</taxon>
        <taxon>Eutheria</taxon>
        <taxon>Euarchontoglires</taxon>
        <taxon>Primates</taxon>
        <taxon>Haplorrhini</taxon>
        <taxon>Catarrhini</taxon>
        <taxon>Hominidae</taxon>
        <taxon>Pan</taxon>
    </lineage>
</organism>
<keyword id="KW-0044">Antibiotic</keyword>
<keyword id="KW-0929">Antimicrobial</keyword>
<keyword id="KW-0211">Defensin</keyword>
<keyword id="KW-1015">Disulfide bond</keyword>
<keyword id="KW-1185">Reference proteome</keyword>
<keyword id="KW-0964">Secreted</keyword>
<keyword id="KW-0732">Signal</keyword>
<dbReference type="EMBL" id="DQ012063">
    <property type="protein sequence ID" value="AAY59794.1"/>
    <property type="molecule type" value="mRNA"/>
</dbReference>
<dbReference type="RefSeq" id="NP_001123232.1">
    <property type="nucleotide sequence ID" value="NM_001129760.1"/>
</dbReference>
<dbReference type="SMR" id="Q30KL6"/>
<dbReference type="FunCoup" id="Q30KL6">
    <property type="interactions" value="9"/>
</dbReference>
<dbReference type="STRING" id="9598.ENSPTRP00000049999"/>
<dbReference type="PaxDb" id="9598-ENSPTRP00000049999"/>
<dbReference type="Ensembl" id="ENSPTRT00000057154.3">
    <property type="protein sequence ID" value="ENSPTRP00000049999.2"/>
    <property type="gene ID" value="ENSPTRG00000029615.3"/>
</dbReference>
<dbReference type="GeneID" id="100170035"/>
<dbReference type="KEGG" id="ptr:100170035"/>
<dbReference type="CTD" id="245913"/>
<dbReference type="VGNC" id="VGNC:11057">
    <property type="gene designation" value="DEFB110"/>
</dbReference>
<dbReference type="eggNOG" id="ENOG502TGN0">
    <property type="taxonomic scope" value="Eukaryota"/>
</dbReference>
<dbReference type="GeneTree" id="ENSGT00390000006761"/>
<dbReference type="HOGENOM" id="CLU_187020_0_0_1"/>
<dbReference type="InParanoid" id="Q30KL6"/>
<dbReference type="OMA" id="IRIAYCM"/>
<dbReference type="OrthoDB" id="1248at9604"/>
<dbReference type="Proteomes" id="UP000002277">
    <property type="component" value="Chromosome 6"/>
</dbReference>
<dbReference type="GO" id="GO:0005615">
    <property type="term" value="C:extracellular space"/>
    <property type="evidence" value="ECO:0000318"/>
    <property type="project" value="GO_Central"/>
</dbReference>
<dbReference type="GO" id="GO:0031731">
    <property type="term" value="F:CCR6 chemokine receptor binding"/>
    <property type="evidence" value="ECO:0000318"/>
    <property type="project" value="GO_Central"/>
</dbReference>
<dbReference type="GO" id="GO:0042056">
    <property type="term" value="F:chemoattractant activity"/>
    <property type="evidence" value="ECO:0000318"/>
    <property type="project" value="GO_Central"/>
</dbReference>
<dbReference type="GO" id="GO:0060326">
    <property type="term" value="P:cell chemotaxis"/>
    <property type="evidence" value="ECO:0000318"/>
    <property type="project" value="GO_Central"/>
</dbReference>
<dbReference type="GO" id="GO:0042742">
    <property type="term" value="P:defense response to bacterium"/>
    <property type="evidence" value="ECO:0000318"/>
    <property type="project" value="GO_Central"/>
</dbReference>
<dbReference type="GO" id="GO:0045087">
    <property type="term" value="P:innate immune response"/>
    <property type="evidence" value="ECO:0007669"/>
    <property type="project" value="InterPro"/>
</dbReference>
<dbReference type="InterPro" id="IPR025933">
    <property type="entry name" value="Beta_defensin_dom"/>
</dbReference>
<dbReference type="PANTHER" id="PTHR20515">
    <property type="entry name" value="BETA-DEFENSIN"/>
    <property type="match status" value="1"/>
</dbReference>
<dbReference type="PANTHER" id="PTHR20515:SF19">
    <property type="entry name" value="BETA-DEFENSIN 110"/>
    <property type="match status" value="1"/>
</dbReference>
<dbReference type="Pfam" id="PF13841">
    <property type="entry name" value="Defensin_beta_2"/>
    <property type="match status" value="1"/>
</dbReference>